<dbReference type="EMBL" id="CP000789">
    <property type="protein sequence ID" value="ABU72197.1"/>
    <property type="molecule type" value="Genomic_DNA"/>
</dbReference>
<dbReference type="SMR" id="A7N1X3"/>
<dbReference type="KEGG" id="vha:VIBHAR_03249"/>
<dbReference type="PATRIC" id="fig|338187.36.peg.3177"/>
<dbReference type="Proteomes" id="UP000008152">
    <property type="component" value="Chromosome I"/>
</dbReference>
<dbReference type="GO" id="GO:1990904">
    <property type="term" value="C:ribonucleoprotein complex"/>
    <property type="evidence" value="ECO:0007669"/>
    <property type="project" value="UniProtKB-KW"/>
</dbReference>
<dbReference type="GO" id="GO:0005840">
    <property type="term" value="C:ribosome"/>
    <property type="evidence" value="ECO:0007669"/>
    <property type="project" value="UniProtKB-KW"/>
</dbReference>
<dbReference type="GO" id="GO:0003735">
    <property type="term" value="F:structural constituent of ribosome"/>
    <property type="evidence" value="ECO:0007669"/>
    <property type="project" value="InterPro"/>
</dbReference>
<dbReference type="GO" id="GO:0006412">
    <property type="term" value="P:translation"/>
    <property type="evidence" value="ECO:0007669"/>
    <property type="project" value="UniProtKB-UniRule"/>
</dbReference>
<dbReference type="HAMAP" id="MF_00251">
    <property type="entry name" value="Ribosomal_bL36"/>
    <property type="match status" value="1"/>
</dbReference>
<dbReference type="InterPro" id="IPR000473">
    <property type="entry name" value="Ribosomal_bL36"/>
</dbReference>
<dbReference type="InterPro" id="IPR035977">
    <property type="entry name" value="Ribosomal_bL36_sp"/>
</dbReference>
<dbReference type="InterPro" id="IPR047621">
    <property type="entry name" value="Ribosomal_L36_bact"/>
</dbReference>
<dbReference type="NCBIfam" id="NF002021">
    <property type="entry name" value="PRK00831.1"/>
    <property type="match status" value="1"/>
</dbReference>
<dbReference type="NCBIfam" id="TIGR01022">
    <property type="entry name" value="rpmJ_bact"/>
    <property type="match status" value="1"/>
</dbReference>
<dbReference type="PANTHER" id="PTHR47781">
    <property type="entry name" value="50S RIBOSOMAL PROTEIN L36 2"/>
    <property type="match status" value="1"/>
</dbReference>
<dbReference type="PANTHER" id="PTHR47781:SF1">
    <property type="entry name" value="LARGE RIBOSOMAL SUBUNIT PROTEIN BL36B"/>
    <property type="match status" value="1"/>
</dbReference>
<dbReference type="Pfam" id="PF00444">
    <property type="entry name" value="Ribosomal_L36"/>
    <property type="match status" value="1"/>
</dbReference>
<dbReference type="SUPFAM" id="SSF57840">
    <property type="entry name" value="Ribosomal protein L36"/>
    <property type="match status" value="1"/>
</dbReference>
<dbReference type="PROSITE" id="PS00828">
    <property type="entry name" value="RIBOSOMAL_L36"/>
    <property type="match status" value="1"/>
</dbReference>
<protein>
    <recommendedName>
        <fullName evidence="1">Large ribosomal subunit protein bL36B</fullName>
    </recommendedName>
    <alternativeName>
        <fullName evidence="2">50S ribosomal protein L36 2</fullName>
    </alternativeName>
</protein>
<accession>A7N1X3</accession>
<feature type="chain" id="PRO_0000344730" description="Large ribosomal subunit protein bL36B">
    <location>
        <begin position="1"/>
        <end position="41"/>
    </location>
</feature>
<organism>
    <name type="scientific">Vibrio campbellii (strain ATCC BAA-1116)</name>
    <dbReference type="NCBI Taxonomy" id="2902295"/>
    <lineage>
        <taxon>Bacteria</taxon>
        <taxon>Pseudomonadati</taxon>
        <taxon>Pseudomonadota</taxon>
        <taxon>Gammaproteobacteria</taxon>
        <taxon>Vibrionales</taxon>
        <taxon>Vibrionaceae</taxon>
        <taxon>Vibrio</taxon>
    </lineage>
</organism>
<name>RL362_VIBC1</name>
<evidence type="ECO:0000255" key="1">
    <source>
        <dbReference type="HAMAP-Rule" id="MF_00251"/>
    </source>
</evidence>
<evidence type="ECO:0000305" key="2"/>
<reference key="1">
    <citation type="submission" date="2007-08" db="EMBL/GenBank/DDBJ databases">
        <authorList>
            <consortium name="The Vibrio harveyi Genome Sequencing Project"/>
            <person name="Bassler B."/>
            <person name="Clifton S.W."/>
            <person name="Fulton L."/>
            <person name="Delehaunty K."/>
            <person name="Fronick C."/>
            <person name="Harrison M."/>
            <person name="Markivic C."/>
            <person name="Fulton R."/>
            <person name="Tin-Wollam A.-M."/>
            <person name="Shah N."/>
            <person name="Pepin K."/>
            <person name="Nash W."/>
            <person name="Thiruvilangam P."/>
            <person name="Bhonagiri V."/>
            <person name="Waters C."/>
            <person name="Tu K.C."/>
            <person name="Irgon J."/>
            <person name="Wilson R.K."/>
        </authorList>
    </citation>
    <scope>NUCLEOTIDE SEQUENCE [LARGE SCALE GENOMIC DNA]</scope>
    <source>
        <strain>ATCC BAA-1116 / BB120</strain>
    </source>
</reference>
<proteinExistence type="inferred from homology"/>
<keyword id="KW-0687">Ribonucleoprotein</keyword>
<keyword id="KW-0689">Ribosomal protein</keyword>
<gene>
    <name evidence="1" type="primary">rpmJ2</name>
    <name type="ordered locus">VIBHAR_03249</name>
</gene>
<sequence length="41" mass="4799">MKVVKSLKSAKSRHPDCQIVKRRGRLYVICKTNPRFKAVQK</sequence>
<comment type="similarity">
    <text evidence="1">Belongs to the bacterial ribosomal protein bL36 family.</text>
</comment>